<feature type="chain" id="PRO_0000254036" description="WD repeat-containing protein 89">
    <location>
        <begin position="1"/>
        <end position="387"/>
    </location>
</feature>
<feature type="repeat" description="WD 1">
    <location>
        <begin position="21"/>
        <end position="65"/>
    </location>
</feature>
<feature type="repeat" description="WD 2">
    <location>
        <begin position="68"/>
        <end position="107"/>
    </location>
</feature>
<feature type="repeat" description="WD 3">
    <location>
        <begin position="112"/>
        <end position="156"/>
    </location>
</feature>
<feature type="repeat" description="WD 4">
    <location>
        <begin position="168"/>
        <end position="208"/>
    </location>
</feature>
<feature type="repeat" description="WD 5">
    <location>
        <begin position="214"/>
        <end position="254"/>
    </location>
</feature>
<feature type="repeat" description="WD 6">
    <location>
        <begin position="319"/>
        <end position="358"/>
    </location>
</feature>
<protein>
    <recommendedName>
        <fullName>WD repeat-containing protein 89</fullName>
    </recommendedName>
</protein>
<sequence length="387" mass="43215">MEKIEEQFANLHIVKCSLGTKEPTYLLGIDTSKTVQAGKENLVAVLCSNGSIRIYDKERLNVLREFSGYPGLLNGVRFANSCDSVYSACTDGTVKCWDARVAREKPVQLFKGYPSNIFISFDINCNDHIICAGTEKVDDDALLVFWDARMNSQNLSTTKDSLGAYSETHSDDVTQVRFHPSNPNMVVSGSSDGLVNVFDINIDNEEDALVTTCNSISSVSCIGWSGKGYKQIYCMTHDEGFYWWDLNHLDTDEPVTRLNIQDVREVVNMKEDALDYLIGGLYHEKTDTLHVIGGTNKGRIHLMNCSMSGLTHVTSLQGGHAATVRSFCWNVQDDSLLTGGEDAQLLLWKPGAIEKTFTKKESMKIASSVHQRVRVHSNDSYKRRKKQ</sequence>
<name>WDR89_HUMAN</name>
<organism>
    <name type="scientific">Homo sapiens</name>
    <name type="common">Human</name>
    <dbReference type="NCBI Taxonomy" id="9606"/>
    <lineage>
        <taxon>Eukaryota</taxon>
        <taxon>Metazoa</taxon>
        <taxon>Chordata</taxon>
        <taxon>Craniata</taxon>
        <taxon>Vertebrata</taxon>
        <taxon>Euteleostomi</taxon>
        <taxon>Mammalia</taxon>
        <taxon>Eutheria</taxon>
        <taxon>Euarchontoglires</taxon>
        <taxon>Primates</taxon>
        <taxon>Haplorrhini</taxon>
        <taxon>Catarrhini</taxon>
        <taxon>Hominidae</taxon>
        <taxon>Homo</taxon>
    </lineage>
</organism>
<reference key="1">
    <citation type="submission" date="1998-12" db="EMBL/GenBank/DDBJ databases">
        <authorList>
            <person name="Zhao B."/>
            <person name="Xu Y.Y."/>
            <person name="Liu Y.Q."/>
            <person name="Wang X.Y."/>
            <person name="Liu B."/>
            <person name="Ye J."/>
            <person name="Song L."/>
            <person name="Zhao Y."/>
            <person name="Cao H.Q."/>
            <person name="Zhao X.W."/>
            <person name="Gao Y."/>
            <person name="Liu L.S."/>
            <person name="Ding J.F."/>
            <person name="Gao R.L."/>
            <person name="Wu Q.Y."/>
            <person name="Qiang B.Q."/>
            <person name="Yuan J.G."/>
            <person name="Liew C.C."/>
            <person name="Zhao M.S."/>
            <person name="Hui R.T."/>
        </authorList>
    </citation>
    <scope>NUCLEOTIDE SEQUENCE [LARGE SCALE MRNA]</scope>
    <source>
        <tissue>Heart</tissue>
    </source>
</reference>
<reference key="2">
    <citation type="submission" date="2003-02" db="EMBL/GenBank/DDBJ databases">
        <title>Full-length cDNA libraries and normalization.</title>
        <authorList>
            <person name="Li W.B."/>
            <person name="Gruber C."/>
            <person name="Jessee J."/>
            <person name="Polayes D."/>
        </authorList>
    </citation>
    <scope>NUCLEOTIDE SEQUENCE [LARGE SCALE MRNA]</scope>
    <source>
        <tissue>Fetal liver</tissue>
    </source>
</reference>
<reference key="3">
    <citation type="journal article" date="2004" name="Nat. Genet.">
        <title>Complete sequencing and characterization of 21,243 full-length human cDNAs.</title>
        <authorList>
            <person name="Ota T."/>
            <person name="Suzuki Y."/>
            <person name="Nishikawa T."/>
            <person name="Otsuki T."/>
            <person name="Sugiyama T."/>
            <person name="Irie R."/>
            <person name="Wakamatsu A."/>
            <person name="Hayashi K."/>
            <person name="Sato H."/>
            <person name="Nagai K."/>
            <person name="Kimura K."/>
            <person name="Makita H."/>
            <person name="Sekine M."/>
            <person name="Obayashi M."/>
            <person name="Nishi T."/>
            <person name="Shibahara T."/>
            <person name="Tanaka T."/>
            <person name="Ishii S."/>
            <person name="Yamamoto J."/>
            <person name="Saito K."/>
            <person name="Kawai Y."/>
            <person name="Isono Y."/>
            <person name="Nakamura Y."/>
            <person name="Nagahari K."/>
            <person name="Murakami K."/>
            <person name="Yasuda T."/>
            <person name="Iwayanagi T."/>
            <person name="Wagatsuma M."/>
            <person name="Shiratori A."/>
            <person name="Sudo H."/>
            <person name="Hosoiri T."/>
            <person name="Kaku Y."/>
            <person name="Kodaira H."/>
            <person name="Kondo H."/>
            <person name="Sugawara M."/>
            <person name="Takahashi M."/>
            <person name="Kanda K."/>
            <person name="Yokoi T."/>
            <person name="Furuya T."/>
            <person name="Kikkawa E."/>
            <person name="Omura Y."/>
            <person name="Abe K."/>
            <person name="Kamihara K."/>
            <person name="Katsuta N."/>
            <person name="Sato K."/>
            <person name="Tanikawa M."/>
            <person name="Yamazaki M."/>
            <person name="Ninomiya K."/>
            <person name="Ishibashi T."/>
            <person name="Yamashita H."/>
            <person name="Murakawa K."/>
            <person name="Fujimori K."/>
            <person name="Tanai H."/>
            <person name="Kimata M."/>
            <person name="Watanabe M."/>
            <person name="Hiraoka S."/>
            <person name="Chiba Y."/>
            <person name="Ishida S."/>
            <person name="Ono Y."/>
            <person name="Takiguchi S."/>
            <person name="Watanabe S."/>
            <person name="Yosida M."/>
            <person name="Hotuta T."/>
            <person name="Kusano J."/>
            <person name="Kanehori K."/>
            <person name="Takahashi-Fujii A."/>
            <person name="Hara H."/>
            <person name="Tanase T.-O."/>
            <person name="Nomura Y."/>
            <person name="Togiya S."/>
            <person name="Komai F."/>
            <person name="Hara R."/>
            <person name="Takeuchi K."/>
            <person name="Arita M."/>
            <person name="Imose N."/>
            <person name="Musashino K."/>
            <person name="Yuuki H."/>
            <person name="Oshima A."/>
            <person name="Sasaki N."/>
            <person name="Aotsuka S."/>
            <person name="Yoshikawa Y."/>
            <person name="Matsunawa H."/>
            <person name="Ichihara T."/>
            <person name="Shiohata N."/>
            <person name="Sano S."/>
            <person name="Moriya S."/>
            <person name="Momiyama H."/>
            <person name="Satoh N."/>
            <person name="Takami S."/>
            <person name="Terashima Y."/>
            <person name="Suzuki O."/>
            <person name="Nakagawa S."/>
            <person name="Senoh A."/>
            <person name="Mizoguchi H."/>
            <person name="Goto Y."/>
            <person name="Shimizu F."/>
            <person name="Wakebe H."/>
            <person name="Hishigaki H."/>
            <person name="Watanabe T."/>
            <person name="Sugiyama A."/>
            <person name="Takemoto M."/>
            <person name="Kawakami B."/>
            <person name="Yamazaki M."/>
            <person name="Watanabe K."/>
            <person name="Kumagai A."/>
            <person name="Itakura S."/>
            <person name="Fukuzumi Y."/>
            <person name="Fujimori Y."/>
            <person name="Komiyama M."/>
            <person name="Tashiro H."/>
            <person name="Tanigami A."/>
            <person name="Fujiwara T."/>
            <person name="Ono T."/>
            <person name="Yamada K."/>
            <person name="Fujii Y."/>
            <person name="Ozaki K."/>
            <person name="Hirao M."/>
            <person name="Ohmori Y."/>
            <person name="Kawabata A."/>
            <person name="Hikiji T."/>
            <person name="Kobatake N."/>
            <person name="Inagaki H."/>
            <person name="Ikema Y."/>
            <person name="Okamoto S."/>
            <person name="Okitani R."/>
            <person name="Kawakami T."/>
            <person name="Noguchi S."/>
            <person name="Itoh T."/>
            <person name="Shigeta K."/>
            <person name="Senba T."/>
            <person name="Matsumura K."/>
            <person name="Nakajima Y."/>
            <person name="Mizuno T."/>
            <person name="Morinaga M."/>
            <person name="Sasaki M."/>
            <person name="Togashi T."/>
            <person name="Oyama M."/>
            <person name="Hata H."/>
            <person name="Watanabe M."/>
            <person name="Komatsu T."/>
            <person name="Mizushima-Sugano J."/>
            <person name="Satoh T."/>
            <person name="Shirai Y."/>
            <person name="Takahashi Y."/>
            <person name="Nakagawa K."/>
            <person name="Okumura K."/>
            <person name="Nagase T."/>
            <person name="Nomura N."/>
            <person name="Kikuchi H."/>
            <person name="Masuho Y."/>
            <person name="Yamashita R."/>
            <person name="Nakai K."/>
            <person name="Yada T."/>
            <person name="Nakamura Y."/>
            <person name="Ohara O."/>
            <person name="Isogai T."/>
            <person name="Sugano S."/>
        </authorList>
    </citation>
    <scope>NUCLEOTIDE SEQUENCE [LARGE SCALE MRNA]</scope>
    <source>
        <tissue>Tongue</tissue>
    </source>
</reference>
<reference key="4">
    <citation type="journal article" date="2004" name="Genome Res.">
        <title>The status, quality, and expansion of the NIH full-length cDNA project: the Mammalian Gene Collection (MGC).</title>
        <authorList>
            <consortium name="The MGC Project Team"/>
        </authorList>
    </citation>
    <scope>NUCLEOTIDE SEQUENCE [LARGE SCALE MRNA]</scope>
    <source>
        <tissue>Eye</tissue>
    </source>
</reference>
<accession>Q96FK6</accession>
<gene>
    <name type="primary">WDR89</name>
    <name type="synonym">C14orf150</name>
    <name type="ORF">MSTP050</name>
</gene>
<dbReference type="EMBL" id="AF115513">
    <property type="protein sequence ID" value="AAO06950.1"/>
    <property type="molecule type" value="mRNA"/>
</dbReference>
<dbReference type="EMBL" id="BX248008">
    <property type="protein sequence ID" value="CAD62336.1"/>
    <property type="molecule type" value="mRNA"/>
</dbReference>
<dbReference type="EMBL" id="AK095324">
    <property type="protein sequence ID" value="BAC04530.1"/>
    <property type="molecule type" value="mRNA"/>
</dbReference>
<dbReference type="EMBL" id="BC010698">
    <property type="protein sequence ID" value="AAH10698.1"/>
    <property type="molecule type" value="mRNA"/>
</dbReference>
<dbReference type="CCDS" id="CCDS9759.1"/>
<dbReference type="RefSeq" id="NP_001008726.1">
    <property type="nucleotide sequence ID" value="NM_001008726.3"/>
</dbReference>
<dbReference type="RefSeq" id="NP_001245201.1">
    <property type="nucleotide sequence ID" value="NM_001258272.2"/>
</dbReference>
<dbReference type="RefSeq" id="NP_001369352.1">
    <property type="nucleotide sequence ID" value="NM_001382423.1"/>
</dbReference>
<dbReference type="RefSeq" id="NP_001369353.1">
    <property type="nucleotide sequence ID" value="NM_001382424.1"/>
</dbReference>
<dbReference type="RefSeq" id="NP_001369354.1">
    <property type="nucleotide sequence ID" value="NM_001382425.1"/>
</dbReference>
<dbReference type="RefSeq" id="NP_001369355.1">
    <property type="nucleotide sequence ID" value="NM_001382426.1"/>
</dbReference>
<dbReference type="RefSeq" id="NP_001369356.1">
    <property type="nucleotide sequence ID" value="NM_001382427.1"/>
</dbReference>
<dbReference type="RefSeq" id="NP_001369357.1">
    <property type="nucleotide sequence ID" value="NM_001382428.1"/>
</dbReference>
<dbReference type="RefSeq" id="NP_001369358.1">
    <property type="nucleotide sequence ID" value="NM_001382429.1"/>
</dbReference>
<dbReference type="RefSeq" id="NP_542397.1">
    <property type="nucleotide sequence ID" value="NM_080666.4"/>
</dbReference>
<dbReference type="RefSeq" id="XP_011534687.1">
    <property type="nucleotide sequence ID" value="XM_011536385.2"/>
</dbReference>
<dbReference type="SMR" id="Q96FK6"/>
<dbReference type="BioGRID" id="125208">
    <property type="interactions" value="35"/>
</dbReference>
<dbReference type="FunCoup" id="Q96FK6">
    <property type="interactions" value="1489"/>
</dbReference>
<dbReference type="IntAct" id="Q96FK6">
    <property type="interactions" value="26"/>
</dbReference>
<dbReference type="STRING" id="9606.ENSP00000378399"/>
<dbReference type="iPTMnet" id="Q96FK6"/>
<dbReference type="PhosphoSitePlus" id="Q96FK6"/>
<dbReference type="BioMuta" id="WDR89"/>
<dbReference type="DMDM" id="74762654"/>
<dbReference type="jPOST" id="Q96FK6"/>
<dbReference type="MassIVE" id="Q96FK6"/>
<dbReference type="PaxDb" id="9606-ENSP00000378399"/>
<dbReference type="PeptideAtlas" id="Q96FK6"/>
<dbReference type="ProteomicsDB" id="76537"/>
<dbReference type="Pumba" id="Q96FK6"/>
<dbReference type="Antibodypedia" id="38">
    <property type="antibodies" value="102 antibodies from 16 providers"/>
</dbReference>
<dbReference type="DNASU" id="112840"/>
<dbReference type="Ensembl" id="ENST00000267522.7">
    <property type="protein sequence ID" value="ENSP00000267522.3"/>
    <property type="gene ID" value="ENSG00000140006.12"/>
</dbReference>
<dbReference type="Ensembl" id="ENST00000394942.2">
    <property type="protein sequence ID" value="ENSP00000378399.2"/>
    <property type="gene ID" value="ENSG00000140006.12"/>
</dbReference>
<dbReference type="Ensembl" id="ENST00000620954.2">
    <property type="protein sequence ID" value="ENSP00000480112.1"/>
    <property type="gene ID" value="ENSG00000140006.12"/>
</dbReference>
<dbReference type="GeneID" id="112840"/>
<dbReference type="KEGG" id="hsa:112840"/>
<dbReference type="MANE-Select" id="ENST00000620954.2">
    <property type="protein sequence ID" value="ENSP00000480112.1"/>
    <property type="RefSeq nucleotide sequence ID" value="NM_080666.4"/>
    <property type="RefSeq protein sequence ID" value="NP_542397.1"/>
</dbReference>
<dbReference type="UCSC" id="uc031qox.2">
    <property type="organism name" value="human"/>
</dbReference>
<dbReference type="AGR" id="HGNC:20489"/>
<dbReference type="CTD" id="112840"/>
<dbReference type="DisGeNET" id="112840"/>
<dbReference type="GeneCards" id="WDR89"/>
<dbReference type="HGNC" id="HGNC:20489">
    <property type="gene designation" value="WDR89"/>
</dbReference>
<dbReference type="HPA" id="ENSG00000140006">
    <property type="expression patterns" value="Low tissue specificity"/>
</dbReference>
<dbReference type="neXtProt" id="NX_Q96FK6"/>
<dbReference type="OpenTargets" id="ENSG00000140006"/>
<dbReference type="PharmGKB" id="PA134871067"/>
<dbReference type="VEuPathDB" id="HostDB:ENSG00000140006"/>
<dbReference type="eggNOG" id="KOG1188">
    <property type="taxonomic scope" value="Eukaryota"/>
</dbReference>
<dbReference type="GeneTree" id="ENSGT00390000006996"/>
<dbReference type="HOGENOM" id="CLU_037323_4_0_1"/>
<dbReference type="InParanoid" id="Q96FK6"/>
<dbReference type="OMA" id="YHEKTDK"/>
<dbReference type="OrthoDB" id="25131at2759"/>
<dbReference type="PAN-GO" id="Q96FK6">
    <property type="GO annotations" value="0 GO annotations based on evolutionary models"/>
</dbReference>
<dbReference type="PhylomeDB" id="Q96FK6"/>
<dbReference type="TreeFam" id="TF324390"/>
<dbReference type="PathwayCommons" id="Q96FK6"/>
<dbReference type="SignaLink" id="Q96FK6"/>
<dbReference type="BioGRID-ORCS" id="112840">
    <property type="hits" value="38 hits in 1153 CRISPR screens"/>
</dbReference>
<dbReference type="CD-CODE" id="91857CE7">
    <property type="entry name" value="Nucleolus"/>
</dbReference>
<dbReference type="ChiTaRS" id="WDR89">
    <property type="organism name" value="human"/>
</dbReference>
<dbReference type="GenomeRNAi" id="112840"/>
<dbReference type="Pharos" id="Q96FK6">
    <property type="development level" value="Tdark"/>
</dbReference>
<dbReference type="PRO" id="PR:Q96FK6"/>
<dbReference type="Proteomes" id="UP000005640">
    <property type="component" value="Chromosome 14"/>
</dbReference>
<dbReference type="RNAct" id="Q96FK6">
    <property type="molecule type" value="protein"/>
</dbReference>
<dbReference type="Bgee" id="ENSG00000140006">
    <property type="expression patterns" value="Expressed in kidney epithelium and 196 other cell types or tissues"/>
</dbReference>
<dbReference type="ExpressionAtlas" id="Q96FK6">
    <property type="expression patterns" value="baseline and differential"/>
</dbReference>
<dbReference type="GO" id="GO:0022038">
    <property type="term" value="P:corpus callosum development"/>
    <property type="evidence" value="ECO:0007669"/>
    <property type="project" value="Ensembl"/>
</dbReference>
<dbReference type="GO" id="GO:0021591">
    <property type="term" value="P:ventricular system development"/>
    <property type="evidence" value="ECO:0007669"/>
    <property type="project" value="Ensembl"/>
</dbReference>
<dbReference type="Gene3D" id="2.130.10.10">
    <property type="entry name" value="YVTN repeat-like/Quinoprotein amine dehydrogenase"/>
    <property type="match status" value="2"/>
</dbReference>
<dbReference type="InterPro" id="IPR015943">
    <property type="entry name" value="WD40/YVTN_repeat-like_dom_sf"/>
</dbReference>
<dbReference type="InterPro" id="IPR036322">
    <property type="entry name" value="WD40_repeat_dom_sf"/>
</dbReference>
<dbReference type="InterPro" id="IPR001680">
    <property type="entry name" value="WD40_rpt"/>
</dbReference>
<dbReference type="InterPro" id="IPR039328">
    <property type="entry name" value="WDR89"/>
</dbReference>
<dbReference type="PANTHER" id="PTHR22889">
    <property type="entry name" value="WD REPEAT-CONTAINING PROTEIN 89"/>
    <property type="match status" value="1"/>
</dbReference>
<dbReference type="PANTHER" id="PTHR22889:SF0">
    <property type="entry name" value="WD REPEAT-CONTAINING PROTEIN 89"/>
    <property type="match status" value="1"/>
</dbReference>
<dbReference type="Pfam" id="PF00400">
    <property type="entry name" value="WD40"/>
    <property type="match status" value="3"/>
</dbReference>
<dbReference type="SMART" id="SM00320">
    <property type="entry name" value="WD40"/>
    <property type="match status" value="5"/>
</dbReference>
<dbReference type="SUPFAM" id="SSF50978">
    <property type="entry name" value="WD40 repeat-like"/>
    <property type="match status" value="1"/>
</dbReference>
<dbReference type="PROSITE" id="PS50082">
    <property type="entry name" value="WD_REPEATS_2"/>
    <property type="match status" value="3"/>
</dbReference>
<dbReference type="PROSITE" id="PS50294">
    <property type="entry name" value="WD_REPEATS_REGION"/>
    <property type="match status" value="3"/>
</dbReference>
<keyword id="KW-1267">Proteomics identification</keyword>
<keyword id="KW-1185">Reference proteome</keyword>
<keyword id="KW-0677">Repeat</keyword>
<keyword id="KW-0853">WD repeat</keyword>
<proteinExistence type="evidence at protein level"/>